<keyword id="KW-1003">Cell membrane</keyword>
<keyword id="KW-0961">Cell wall biogenesis/degradation</keyword>
<keyword id="KW-0472">Membrane</keyword>
<keyword id="KW-1185">Reference proteome</keyword>
<keyword id="KW-0812">Transmembrane</keyword>
<keyword id="KW-1133">Transmembrane helix</keyword>
<sequence>MTKSTYVELGEEKTSNQKGNMKRGVSILDFILRLIAIVATLASAIAMGTTDESLPFFTQFVRFRANYDDLPTLRFFVVASAIVSGYLILSLPLSILHIIRSSAGMTRVIFIILDTVMLGLLTAGSSAAASIVYLAHKGNRKANWFAFCQQYNSFCERISGSLIGSFIAIPLFIMLILLSALVLSRR</sequence>
<feature type="chain" id="PRO_0000417782" description="Casparian strip membrane protein 3">
    <location>
        <begin position="1"/>
        <end position="186"/>
    </location>
</feature>
<feature type="topological domain" description="Cytoplasmic" evidence="2">
    <location>
        <begin position="1"/>
        <end position="26"/>
    </location>
</feature>
<feature type="transmembrane region" description="Helical" evidence="2">
    <location>
        <begin position="27"/>
        <end position="47"/>
    </location>
</feature>
<feature type="topological domain" description="Extracellular" evidence="2">
    <location>
        <begin position="48"/>
        <end position="74"/>
    </location>
</feature>
<feature type="transmembrane region" description="Helical" evidence="2">
    <location>
        <begin position="75"/>
        <end position="95"/>
    </location>
</feature>
<feature type="topological domain" description="Cytoplasmic" evidence="2">
    <location>
        <begin position="96"/>
        <end position="107"/>
    </location>
</feature>
<feature type="transmembrane region" description="Helical" evidence="2">
    <location>
        <begin position="108"/>
        <end position="128"/>
    </location>
</feature>
<feature type="topological domain" description="Extracellular" evidence="2">
    <location>
        <begin position="129"/>
        <end position="161"/>
    </location>
</feature>
<feature type="transmembrane region" description="Helical" evidence="2">
    <location>
        <begin position="162"/>
        <end position="182"/>
    </location>
</feature>
<feature type="topological domain" description="Cytoplasmic" evidence="2">
    <location>
        <begin position="183"/>
        <end position="186"/>
    </location>
</feature>
<protein>
    <recommendedName>
        <fullName>Casparian strip membrane protein 3</fullName>
        <shortName>MtCASP3</shortName>
    </recommendedName>
</protein>
<comment type="function">
    <text evidence="1">Regulates membrane-cell wall junctions and localized cell wall deposition. Required for establishment of the Casparian strip membrane domain (CSD) and the subsequent formation of Casparian strips, a cell wall modification of the root endodermis that determines an apoplastic barrier between the intraorganismal apoplasm and the extraorganismal apoplasm and prevents lateral diffusion (By similarity).</text>
</comment>
<comment type="subunit">
    <text evidence="1">Homodimer and heterodimers.</text>
</comment>
<comment type="subcellular location">
    <subcellularLocation>
        <location evidence="1">Cell membrane</location>
        <topology evidence="1">Multi-pass membrane protein</topology>
    </subcellularLocation>
    <text evidence="1">Very restricted localization following a belt shape within the plasma membrane which coincides with the position of the Casparian strip membrane domain in the root endodermis.</text>
</comment>
<comment type="similarity">
    <text evidence="3">Belongs to the Casparian strip membrane proteins (CASP) family.</text>
</comment>
<name>CASP3_MEDTR</name>
<accession>G7L218</accession>
<reference key="1">
    <citation type="journal article" date="2011" name="Nature">
        <title>The Medicago genome provides insight into the evolution of rhizobial symbioses.</title>
        <authorList>
            <person name="Young N.D."/>
            <person name="Debelle F."/>
            <person name="Oldroyd G.E.D."/>
            <person name="Geurts R."/>
            <person name="Cannon S.B."/>
            <person name="Udvardi M.K."/>
            <person name="Benedito V.A."/>
            <person name="Mayer K.F.X."/>
            <person name="Gouzy J."/>
            <person name="Schoof H."/>
            <person name="Van de Peer Y."/>
            <person name="Proost S."/>
            <person name="Cook D.R."/>
            <person name="Meyers B.C."/>
            <person name="Spannagl M."/>
            <person name="Cheung F."/>
            <person name="De Mita S."/>
            <person name="Krishnakumar V."/>
            <person name="Gundlach H."/>
            <person name="Zhou S."/>
            <person name="Mudge J."/>
            <person name="Bharti A.K."/>
            <person name="Murray J.D."/>
            <person name="Naoumkina M.A."/>
            <person name="Rosen B."/>
            <person name="Silverstein K.A.T."/>
            <person name="Tang H."/>
            <person name="Rombauts S."/>
            <person name="Zhao P.X."/>
            <person name="Zhou P."/>
            <person name="Barbe V."/>
            <person name="Bardou P."/>
            <person name="Bechner M."/>
            <person name="Bellec A."/>
            <person name="Berger A."/>
            <person name="Berges H."/>
            <person name="Bidwell S."/>
            <person name="Bisseling T."/>
            <person name="Choisne N."/>
            <person name="Couloux A."/>
            <person name="Denny R."/>
            <person name="Deshpande S."/>
            <person name="Dai X."/>
            <person name="Doyle J.J."/>
            <person name="Dudez A.-M."/>
            <person name="Farmer A.D."/>
            <person name="Fouteau S."/>
            <person name="Franken C."/>
            <person name="Gibelin C."/>
            <person name="Gish J."/>
            <person name="Goldstein S."/>
            <person name="Gonzalez A.J."/>
            <person name="Green P.J."/>
            <person name="Hallab A."/>
            <person name="Hartog M."/>
            <person name="Hua A."/>
            <person name="Humphray S.J."/>
            <person name="Jeong D.-H."/>
            <person name="Jing Y."/>
            <person name="Jocker A."/>
            <person name="Kenton S.M."/>
            <person name="Kim D.-J."/>
            <person name="Klee K."/>
            <person name="Lai H."/>
            <person name="Lang C."/>
            <person name="Lin S."/>
            <person name="Macmil S.L."/>
            <person name="Magdelenat G."/>
            <person name="Matthews L."/>
            <person name="McCorrison J."/>
            <person name="Monaghan E.L."/>
            <person name="Mun J.-H."/>
            <person name="Najar F.Z."/>
            <person name="Nicholson C."/>
            <person name="Noirot C."/>
            <person name="O'Bleness M."/>
            <person name="Paule C.R."/>
            <person name="Poulain J."/>
            <person name="Prion F."/>
            <person name="Qin B."/>
            <person name="Qu C."/>
            <person name="Retzel E.F."/>
            <person name="Riddle C."/>
            <person name="Sallet E."/>
            <person name="Samain S."/>
            <person name="Samson N."/>
            <person name="Sanders I."/>
            <person name="Saurat O."/>
            <person name="Scarpelli C."/>
            <person name="Schiex T."/>
            <person name="Segurens B."/>
            <person name="Severin A.J."/>
            <person name="Sherrier D.J."/>
            <person name="Shi R."/>
            <person name="Sims S."/>
            <person name="Singer S.R."/>
            <person name="Sinharoy S."/>
            <person name="Sterck L."/>
            <person name="Viollet A."/>
            <person name="Wang B.-B."/>
            <person name="Wang K."/>
            <person name="Wang M."/>
            <person name="Wang X."/>
            <person name="Warfsmann J."/>
            <person name="Weissenbach J."/>
            <person name="White D.D."/>
            <person name="White J.D."/>
            <person name="Wiley G.B."/>
            <person name="Wincker P."/>
            <person name="Xing Y."/>
            <person name="Yang L."/>
            <person name="Yao Z."/>
            <person name="Ying F."/>
            <person name="Zhai J."/>
            <person name="Zhou L."/>
            <person name="Zuber A."/>
            <person name="Denarie J."/>
            <person name="Dixon R.A."/>
            <person name="May G.D."/>
            <person name="Schwartz D.C."/>
            <person name="Rogers J."/>
            <person name="Quetier F."/>
            <person name="Town C.D."/>
            <person name="Roe B.A."/>
        </authorList>
    </citation>
    <scope>NUCLEOTIDE SEQUENCE [LARGE SCALE GENOMIC DNA]</scope>
    <source>
        <strain>cv. Jemalong A17</strain>
    </source>
</reference>
<reference key="2">
    <citation type="journal article" date="2014" name="BMC Genomics">
        <title>An improved genome release (version Mt4.0) for the model legume Medicago truncatula.</title>
        <authorList>
            <person name="Tang H."/>
            <person name="Krishnakumar V."/>
            <person name="Bidwell S."/>
            <person name="Rosen B."/>
            <person name="Chan A."/>
            <person name="Zhou S."/>
            <person name="Gentzbittel L."/>
            <person name="Childs K.L."/>
            <person name="Yandell M."/>
            <person name="Gundlach H."/>
            <person name="Mayer K.F."/>
            <person name="Schwartz D.C."/>
            <person name="Town C.D."/>
        </authorList>
    </citation>
    <scope>GENOME REANNOTATION</scope>
    <source>
        <strain>cv. Jemalong A17</strain>
    </source>
</reference>
<reference key="3">
    <citation type="journal article" date="2014" name="Plant Physiol.">
        <title>Functional and evolutionary analysis of the CASPARIAN STRIP MEMBRANE DOMAIN PROTEIN family.</title>
        <authorList>
            <person name="Roppolo D."/>
            <person name="Boeckmann B."/>
            <person name="Pfister A."/>
            <person name="Boutet E."/>
            <person name="Rubio M.C."/>
            <person name="Denervaud-Tendon V."/>
            <person name="Vermeer J.E."/>
            <person name="Gheyselinck J."/>
            <person name="Xenarios I."/>
            <person name="Geldner N."/>
        </authorList>
    </citation>
    <scope>GENE FAMILY</scope>
    <scope>NOMENCLATURE</scope>
</reference>
<evidence type="ECO:0000250" key="1"/>
<evidence type="ECO:0000255" key="2"/>
<evidence type="ECO:0000305" key="3"/>
<dbReference type="EMBL" id="CM001223">
    <property type="protein sequence ID" value="AES77481.1"/>
    <property type="molecule type" value="Genomic_DNA"/>
</dbReference>
<dbReference type="SMR" id="G7L218"/>
<dbReference type="STRING" id="3880.G7L218"/>
<dbReference type="PaxDb" id="3880-AES77481"/>
<dbReference type="EnsemblPlants" id="rna38380">
    <property type="protein sequence ID" value="RHN44280.1"/>
    <property type="gene ID" value="gene38380"/>
</dbReference>
<dbReference type="Gramene" id="rna38380">
    <property type="protein sequence ID" value="RHN44280.1"/>
    <property type="gene ID" value="gene38380"/>
</dbReference>
<dbReference type="KEGG" id="mtr:11415242"/>
<dbReference type="eggNOG" id="ENOG502RXTK">
    <property type="taxonomic scope" value="Eukaryota"/>
</dbReference>
<dbReference type="HOGENOM" id="CLU_066104_3_2_1"/>
<dbReference type="OMA" id="HADWFSI"/>
<dbReference type="OrthoDB" id="753675at2759"/>
<dbReference type="Proteomes" id="UP000002051">
    <property type="component" value="Chomosome 7"/>
</dbReference>
<dbReference type="GO" id="GO:0005886">
    <property type="term" value="C:plasma membrane"/>
    <property type="evidence" value="ECO:0000318"/>
    <property type="project" value="GO_Central"/>
</dbReference>
<dbReference type="GO" id="GO:0042545">
    <property type="term" value="P:cell wall modification"/>
    <property type="evidence" value="ECO:0000318"/>
    <property type="project" value="GO_Central"/>
</dbReference>
<dbReference type="GO" id="GO:0007043">
    <property type="term" value="P:cell-cell junction assembly"/>
    <property type="evidence" value="ECO:0000318"/>
    <property type="project" value="GO_Central"/>
</dbReference>
<dbReference type="InterPro" id="IPR006459">
    <property type="entry name" value="CASP/CASPL"/>
</dbReference>
<dbReference type="InterPro" id="IPR006702">
    <property type="entry name" value="CASP_dom"/>
</dbReference>
<dbReference type="InterPro" id="IPR044173">
    <property type="entry name" value="CASPL"/>
</dbReference>
<dbReference type="NCBIfam" id="TIGR01569">
    <property type="entry name" value="A_tha_TIGR01569"/>
    <property type="match status" value="1"/>
</dbReference>
<dbReference type="PANTHER" id="PTHR36488:SF12">
    <property type="entry name" value="CASP-LIKE PROTEIN"/>
    <property type="match status" value="1"/>
</dbReference>
<dbReference type="PANTHER" id="PTHR36488">
    <property type="entry name" value="CASP-LIKE PROTEIN 1U1"/>
    <property type="match status" value="1"/>
</dbReference>
<dbReference type="Pfam" id="PF04535">
    <property type="entry name" value="CASP_dom"/>
    <property type="match status" value="1"/>
</dbReference>
<proteinExistence type="inferred from homology"/>
<organism>
    <name type="scientific">Medicago truncatula</name>
    <name type="common">Barrel medic</name>
    <name type="synonym">Medicago tribuloides</name>
    <dbReference type="NCBI Taxonomy" id="3880"/>
    <lineage>
        <taxon>Eukaryota</taxon>
        <taxon>Viridiplantae</taxon>
        <taxon>Streptophyta</taxon>
        <taxon>Embryophyta</taxon>
        <taxon>Tracheophyta</taxon>
        <taxon>Spermatophyta</taxon>
        <taxon>Magnoliopsida</taxon>
        <taxon>eudicotyledons</taxon>
        <taxon>Gunneridae</taxon>
        <taxon>Pentapetalae</taxon>
        <taxon>rosids</taxon>
        <taxon>fabids</taxon>
        <taxon>Fabales</taxon>
        <taxon>Fabaceae</taxon>
        <taxon>Papilionoideae</taxon>
        <taxon>50 kb inversion clade</taxon>
        <taxon>NPAAA clade</taxon>
        <taxon>Hologalegina</taxon>
        <taxon>IRL clade</taxon>
        <taxon>Trifolieae</taxon>
        <taxon>Medicago</taxon>
    </lineage>
</organism>
<gene>
    <name type="ordered locus">MTR_7g011090</name>
</gene>